<evidence type="ECO:0000255" key="1">
    <source>
        <dbReference type="HAMAP-Rule" id="MF_00593"/>
    </source>
</evidence>
<gene>
    <name evidence="1" type="primary">dltA</name>
    <name type="ordered locus">SAUSA300_0835</name>
</gene>
<organism>
    <name type="scientific">Staphylococcus aureus (strain USA300)</name>
    <dbReference type="NCBI Taxonomy" id="367830"/>
    <lineage>
        <taxon>Bacteria</taxon>
        <taxon>Bacillati</taxon>
        <taxon>Bacillota</taxon>
        <taxon>Bacilli</taxon>
        <taxon>Bacillales</taxon>
        <taxon>Staphylococcaceae</taxon>
        <taxon>Staphylococcus</taxon>
    </lineage>
</organism>
<proteinExistence type="inferred from homology"/>
<accession>Q2FIE3</accession>
<dbReference type="EC" id="6.2.1.54" evidence="1"/>
<dbReference type="EMBL" id="CP000255">
    <property type="protein sequence ID" value="ABD22135.1"/>
    <property type="molecule type" value="Genomic_DNA"/>
</dbReference>
<dbReference type="RefSeq" id="WP_000129653.1">
    <property type="nucleotide sequence ID" value="NZ_CP027476.1"/>
</dbReference>
<dbReference type="SMR" id="Q2FIE3"/>
<dbReference type="KEGG" id="saa:SAUSA300_0835"/>
<dbReference type="HOGENOM" id="CLU_000022_2_12_9"/>
<dbReference type="OMA" id="VMDLYPC"/>
<dbReference type="UniPathway" id="UPA00556"/>
<dbReference type="Proteomes" id="UP000001939">
    <property type="component" value="Chromosome"/>
</dbReference>
<dbReference type="GO" id="GO:0005737">
    <property type="term" value="C:cytoplasm"/>
    <property type="evidence" value="ECO:0007669"/>
    <property type="project" value="UniProtKB-SubCell"/>
</dbReference>
<dbReference type="GO" id="GO:0005524">
    <property type="term" value="F:ATP binding"/>
    <property type="evidence" value="ECO:0007669"/>
    <property type="project" value="UniProtKB-KW"/>
</dbReference>
<dbReference type="GO" id="GO:0047473">
    <property type="term" value="F:D-alanine [D-alanyl carrier protein] ligase activity"/>
    <property type="evidence" value="ECO:0007669"/>
    <property type="project" value="UniProtKB-UniRule"/>
</dbReference>
<dbReference type="GO" id="GO:0070395">
    <property type="term" value="P:lipoteichoic acid biosynthetic process"/>
    <property type="evidence" value="ECO:0007669"/>
    <property type="project" value="UniProtKB-UniRule"/>
</dbReference>
<dbReference type="CDD" id="cd05945">
    <property type="entry name" value="DltA"/>
    <property type="match status" value="1"/>
</dbReference>
<dbReference type="FunFam" id="3.30.300.30:FF:000012">
    <property type="entry name" value="D-alanine--D-alanyl carrier protein ligase"/>
    <property type="match status" value="1"/>
</dbReference>
<dbReference type="Gene3D" id="3.30.300.30">
    <property type="match status" value="1"/>
</dbReference>
<dbReference type="Gene3D" id="3.40.50.12780">
    <property type="entry name" value="N-terminal domain of ligase-like"/>
    <property type="match status" value="1"/>
</dbReference>
<dbReference type="HAMAP" id="MF_00593">
    <property type="entry name" value="DltA"/>
    <property type="match status" value="1"/>
</dbReference>
<dbReference type="InterPro" id="IPR010071">
    <property type="entry name" value="AA_adenyl_dom"/>
</dbReference>
<dbReference type="InterPro" id="IPR025110">
    <property type="entry name" value="AMP-bd_C"/>
</dbReference>
<dbReference type="InterPro" id="IPR045851">
    <property type="entry name" value="AMP-bd_C_sf"/>
</dbReference>
<dbReference type="InterPro" id="IPR000873">
    <property type="entry name" value="AMP-dep_synth/lig_dom"/>
</dbReference>
<dbReference type="InterPro" id="IPR042099">
    <property type="entry name" value="ANL_N_sf"/>
</dbReference>
<dbReference type="InterPro" id="IPR010072">
    <property type="entry name" value="DltA"/>
</dbReference>
<dbReference type="InterPro" id="IPR044507">
    <property type="entry name" value="DltA-like"/>
</dbReference>
<dbReference type="NCBIfam" id="TIGR01733">
    <property type="entry name" value="AA-adenyl-dom"/>
    <property type="match status" value="1"/>
</dbReference>
<dbReference type="NCBIfam" id="TIGR01734">
    <property type="entry name" value="D-ala-DACP-lig"/>
    <property type="match status" value="1"/>
</dbReference>
<dbReference type="NCBIfam" id="NF003417">
    <property type="entry name" value="PRK04813.1"/>
    <property type="match status" value="1"/>
</dbReference>
<dbReference type="PANTHER" id="PTHR45398">
    <property type="match status" value="1"/>
</dbReference>
<dbReference type="PANTHER" id="PTHR45398:SF1">
    <property type="entry name" value="ENZYME, PUTATIVE (JCVI)-RELATED"/>
    <property type="match status" value="1"/>
</dbReference>
<dbReference type="Pfam" id="PF00501">
    <property type="entry name" value="AMP-binding"/>
    <property type="match status" value="1"/>
</dbReference>
<dbReference type="Pfam" id="PF13193">
    <property type="entry name" value="AMP-binding_C"/>
    <property type="match status" value="1"/>
</dbReference>
<dbReference type="SUPFAM" id="SSF56801">
    <property type="entry name" value="Acetyl-CoA synthetase-like"/>
    <property type="match status" value="1"/>
</dbReference>
<name>DLTA_STAA3</name>
<sequence length="485" mass="54670">MTDIINKLQAFADANPQSIAVRHTTDELTYQQLMDESSKLAHRLQGSKKPMILFGHMSPYMIVGMIGAIKAGCGYVPVDTSIPEDRIKMIINKVQPEFVFNTTDESFESLEGEVFTIEDIKTSQDPVIFDSQIKDNDTVYTIFTSGSTGEPKGVQIEYASLVQFTEWMLELNKSGNEQQWLNQAPFSFDLSVMAIYPCLASGGTLNLVDKNMINKPKLLNEMLTATPINIWVSTPSFMEMCLLLPTLNEEQYGSLNEFFFCGEILPHRAAKALVNRFPSATIYNTYGPTEATVAVTSIQITQEILDQYPTLPVGVERPGARLSTTDEGELVIEGQSVSLGYLKNDQKTAEVFNFDDGIRTYHTGDKAKFENGQWFIQGRIDFQIKLNGYRMELEEIETQLRQSEFVKEAIVVPVYKNDKVIHLIGAIVPTTEVTDNAEMTKNIKNDLKSRLPEYMIPRKFEWMEQLPLTSNGKIDRKKIAEVING</sequence>
<keyword id="KW-0067">ATP-binding</keyword>
<keyword id="KW-0963">Cytoplasm</keyword>
<keyword id="KW-0436">Ligase</keyword>
<keyword id="KW-0547">Nucleotide-binding</keyword>
<feature type="chain" id="PRO_1000025533" description="D-alanine--D-alanyl carrier protein ligase">
    <location>
        <begin position="1"/>
        <end position="485"/>
    </location>
</feature>
<feature type="binding site" evidence="1">
    <location>
        <begin position="144"/>
        <end position="145"/>
    </location>
    <ligand>
        <name>ATP</name>
        <dbReference type="ChEBI" id="CHEBI:30616"/>
    </ligand>
</feature>
<feature type="binding site" evidence="1">
    <location>
        <position position="189"/>
    </location>
    <ligand>
        <name>D-alanine</name>
        <dbReference type="ChEBI" id="CHEBI:57416"/>
    </ligand>
</feature>
<feature type="binding site" evidence="1">
    <location>
        <begin position="284"/>
        <end position="289"/>
    </location>
    <ligand>
        <name>ATP</name>
        <dbReference type="ChEBI" id="CHEBI:30616"/>
    </ligand>
</feature>
<feature type="binding site" evidence="1">
    <location>
        <position position="293"/>
    </location>
    <ligand>
        <name>D-alanine</name>
        <dbReference type="ChEBI" id="CHEBI:57416"/>
    </ligand>
</feature>
<feature type="binding site" evidence="1">
    <location>
        <position position="365"/>
    </location>
    <ligand>
        <name>ATP</name>
        <dbReference type="ChEBI" id="CHEBI:30616"/>
    </ligand>
</feature>
<feature type="binding site" evidence="1">
    <location>
        <position position="473"/>
    </location>
    <ligand>
        <name>ATP</name>
        <dbReference type="ChEBI" id="CHEBI:30616"/>
    </ligand>
</feature>
<feature type="binding site" evidence="1">
    <location>
        <position position="473"/>
    </location>
    <ligand>
        <name>D-alanine</name>
        <dbReference type="ChEBI" id="CHEBI:57416"/>
    </ligand>
</feature>
<reference key="1">
    <citation type="journal article" date="2006" name="Lancet">
        <title>Complete genome sequence of USA300, an epidemic clone of community-acquired meticillin-resistant Staphylococcus aureus.</title>
        <authorList>
            <person name="Diep B.A."/>
            <person name="Gill S.R."/>
            <person name="Chang R.F."/>
            <person name="Phan T.H."/>
            <person name="Chen J.H."/>
            <person name="Davidson M.G."/>
            <person name="Lin F."/>
            <person name="Lin J."/>
            <person name="Carleton H.A."/>
            <person name="Mongodin E.F."/>
            <person name="Sensabaugh G.F."/>
            <person name="Perdreau-Remington F."/>
        </authorList>
    </citation>
    <scope>NUCLEOTIDE SEQUENCE [LARGE SCALE GENOMIC DNA]</scope>
    <source>
        <strain>USA300</strain>
    </source>
</reference>
<protein>
    <recommendedName>
        <fullName evidence="1">D-alanine--D-alanyl carrier protein ligase</fullName>
        <shortName evidence="1">DCL</shortName>
        <ecNumber evidence="1">6.2.1.54</ecNumber>
    </recommendedName>
    <alternativeName>
        <fullName evidence="1">D-alanine--poly(phosphoribitol) ligase subunit 1</fullName>
    </alternativeName>
    <alternativeName>
        <fullName evidence="1">D-alanine-activating enzyme</fullName>
        <shortName evidence="1">DAE</shortName>
    </alternativeName>
</protein>
<comment type="function">
    <text evidence="1">Catalyzes the first step in the D-alanylation of lipoteichoic acid (LTA), the activation of D-alanine and its transfer onto the D-alanyl carrier protein (Dcp) DltC. In an ATP-dependent two-step reaction, forms a high energy D-alanyl-AMP intermediate, followed by transfer of the D-alanyl residue as a thiol ester to the phosphopantheinyl prosthetic group of the Dcp. D-alanylation of LTA plays an important role in modulating the properties of the cell wall in Gram-positive bacteria, influencing the net charge of the cell wall.</text>
</comment>
<comment type="catalytic activity">
    <reaction evidence="1">
        <text>holo-[D-alanyl-carrier protein] + D-alanine + ATP = D-alanyl-[D-alanyl-carrier protein] + AMP + diphosphate</text>
        <dbReference type="Rhea" id="RHEA:55132"/>
        <dbReference type="Rhea" id="RHEA-COMP:14102"/>
        <dbReference type="Rhea" id="RHEA-COMP:14103"/>
        <dbReference type="ChEBI" id="CHEBI:30616"/>
        <dbReference type="ChEBI" id="CHEBI:33019"/>
        <dbReference type="ChEBI" id="CHEBI:57416"/>
        <dbReference type="ChEBI" id="CHEBI:64479"/>
        <dbReference type="ChEBI" id="CHEBI:138620"/>
        <dbReference type="ChEBI" id="CHEBI:456215"/>
        <dbReference type="EC" id="6.2.1.54"/>
    </reaction>
</comment>
<comment type="pathway">
    <text evidence="1">Cell wall biogenesis; lipoteichoic acid biosynthesis.</text>
</comment>
<comment type="subcellular location">
    <subcellularLocation>
        <location evidence="1">Cytoplasm</location>
    </subcellularLocation>
</comment>
<comment type="similarity">
    <text evidence="1">Belongs to the ATP-dependent AMP-binding enzyme family. DltA subfamily.</text>
</comment>